<name>AT1A1_MOUSE</name>
<evidence type="ECO:0000250" key="1"/>
<evidence type="ECO:0000250" key="2">
    <source>
        <dbReference type="UniProtKB" id="P05023"/>
    </source>
</evidence>
<evidence type="ECO:0000250" key="3">
    <source>
        <dbReference type="UniProtKB" id="P06685"/>
    </source>
</evidence>
<evidence type="ECO:0000255" key="4"/>
<evidence type="ECO:0000256" key="5">
    <source>
        <dbReference type="SAM" id="MobiDB-lite"/>
    </source>
</evidence>
<evidence type="ECO:0000269" key="6">
    <source>
    </source>
</evidence>
<evidence type="ECO:0000269" key="7">
    <source>
    </source>
</evidence>
<evidence type="ECO:0000269" key="8">
    <source>
    </source>
</evidence>
<evidence type="ECO:0000305" key="9"/>
<evidence type="ECO:0007744" key="10">
    <source>
    </source>
</evidence>
<evidence type="ECO:0007744" key="11">
    <source>
    </source>
</evidence>
<evidence type="ECO:0007744" key="12">
    <source>
    </source>
</evidence>
<dbReference type="EC" id="7.2.2.13"/>
<dbReference type="EMBL" id="BC010319">
    <property type="protein sequence ID" value="AAH10319.1"/>
    <property type="molecule type" value="mRNA"/>
</dbReference>
<dbReference type="EMBL" id="BC021496">
    <property type="protein sequence ID" value="AAH21496.1"/>
    <property type="molecule type" value="mRNA"/>
</dbReference>
<dbReference type="EMBL" id="BC023794">
    <property type="protein sequence ID" value="AAH23794.1"/>
    <property type="molecule type" value="mRNA"/>
</dbReference>
<dbReference type="EMBL" id="BC025618">
    <property type="protein sequence ID" value="AAH25618.1"/>
    <property type="molecule type" value="mRNA"/>
</dbReference>
<dbReference type="EMBL" id="BC025627">
    <property type="protein sequence ID" value="AAH25627.1"/>
    <property type="molecule type" value="mRNA"/>
</dbReference>
<dbReference type="EMBL" id="BC025811">
    <property type="protein sequence ID" value="AAH25811.1"/>
    <property type="molecule type" value="mRNA"/>
</dbReference>
<dbReference type="EMBL" id="BC032187">
    <property type="protein sequence ID" value="AAH32187.1"/>
    <property type="molecule type" value="mRNA"/>
</dbReference>
<dbReference type="EMBL" id="BC033435">
    <property type="protein sequence ID" value="AAH33435.1"/>
    <property type="molecule type" value="mRNA"/>
</dbReference>
<dbReference type="EMBL" id="BC033471">
    <property type="protein sequence ID" value="AAH33471.1"/>
    <property type="molecule type" value="mRNA"/>
</dbReference>
<dbReference type="EMBL" id="BC042435">
    <property type="protein sequence ID" value="AAH42435.1"/>
    <property type="molecule type" value="mRNA"/>
</dbReference>
<dbReference type="CCDS" id="CCDS17683.1"/>
<dbReference type="RefSeq" id="NP_659149.1">
    <property type="nucleotide sequence ID" value="NM_144900.2"/>
</dbReference>
<dbReference type="BMRB" id="Q8VDN2"/>
<dbReference type="SMR" id="Q8VDN2"/>
<dbReference type="BioGRID" id="198243">
    <property type="interactions" value="40"/>
</dbReference>
<dbReference type="ComplexPortal" id="CPX-126">
    <property type="entry name" value="Sodium:potassium-exchanging ATPase complex, FXYD2 variant"/>
</dbReference>
<dbReference type="CORUM" id="Q8VDN2"/>
<dbReference type="DIP" id="DIP-31885N"/>
<dbReference type="FunCoup" id="Q8VDN2">
    <property type="interactions" value="1735"/>
</dbReference>
<dbReference type="IntAct" id="Q8VDN2">
    <property type="interactions" value="24"/>
</dbReference>
<dbReference type="MINT" id="Q8VDN2"/>
<dbReference type="STRING" id="10090.ENSMUSP00000039657"/>
<dbReference type="GlyGen" id="Q8VDN2">
    <property type="glycosylation" value="6 sites, 3 N-linked glycans (3 sites), 1 O-linked glycan (3 sites)"/>
</dbReference>
<dbReference type="iPTMnet" id="Q8VDN2"/>
<dbReference type="MetOSite" id="Q8VDN2"/>
<dbReference type="PhosphoSitePlus" id="Q8VDN2"/>
<dbReference type="SwissPalm" id="Q8VDN2"/>
<dbReference type="jPOST" id="Q8VDN2"/>
<dbReference type="PaxDb" id="10090-ENSMUSP00000039657"/>
<dbReference type="PeptideAtlas" id="Q8VDN2"/>
<dbReference type="ProteomicsDB" id="277119"/>
<dbReference type="Pumba" id="Q8VDN2"/>
<dbReference type="Antibodypedia" id="4542">
    <property type="antibodies" value="724 antibodies from 41 providers"/>
</dbReference>
<dbReference type="DNASU" id="11928"/>
<dbReference type="Ensembl" id="ENSMUST00000036493.8">
    <property type="protein sequence ID" value="ENSMUSP00000039657.7"/>
    <property type="gene ID" value="ENSMUSG00000033161.11"/>
</dbReference>
<dbReference type="GeneID" id="11928"/>
<dbReference type="KEGG" id="mmu:11928"/>
<dbReference type="UCSC" id="uc008qrj.2">
    <property type="organism name" value="mouse"/>
</dbReference>
<dbReference type="AGR" id="MGI:88105"/>
<dbReference type="CTD" id="476"/>
<dbReference type="MGI" id="MGI:88105">
    <property type="gene designation" value="Atp1a1"/>
</dbReference>
<dbReference type="VEuPathDB" id="HostDB:ENSMUSG00000033161"/>
<dbReference type="eggNOG" id="KOG0203">
    <property type="taxonomic scope" value="Eukaryota"/>
</dbReference>
<dbReference type="GeneTree" id="ENSGT00940000154840"/>
<dbReference type="HOGENOM" id="CLU_002360_3_0_1"/>
<dbReference type="InParanoid" id="Q8VDN2"/>
<dbReference type="OMA" id="QQPPIFN"/>
<dbReference type="OrthoDB" id="3352408at2759"/>
<dbReference type="PhylomeDB" id="Q8VDN2"/>
<dbReference type="TreeFam" id="TF312838"/>
<dbReference type="Reactome" id="R-MMU-5578775">
    <property type="pathway name" value="Ion homeostasis"/>
</dbReference>
<dbReference type="Reactome" id="R-MMU-936837">
    <property type="pathway name" value="Ion transport by P-type ATPases"/>
</dbReference>
<dbReference type="BioGRID-ORCS" id="11928">
    <property type="hits" value="22 hits in 78 CRISPR screens"/>
</dbReference>
<dbReference type="CD-CODE" id="CE726F99">
    <property type="entry name" value="Postsynaptic density"/>
</dbReference>
<dbReference type="ChiTaRS" id="Atp1a1">
    <property type="organism name" value="mouse"/>
</dbReference>
<dbReference type="PRO" id="PR:Q8VDN2"/>
<dbReference type="Proteomes" id="UP000000589">
    <property type="component" value="Chromosome 3"/>
</dbReference>
<dbReference type="RNAct" id="Q8VDN2">
    <property type="molecule type" value="protein"/>
</dbReference>
<dbReference type="Bgee" id="ENSMUSG00000033161">
    <property type="expression patterns" value="Expressed in vestibular membrane of cochlear duct and 305 other cell types or tissues"/>
</dbReference>
<dbReference type="GO" id="GO:0016324">
    <property type="term" value="C:apical plasma membrane"/>
    <property type="evidence" value="ECO:0000314"/>
    <property type="project" value="MGI"/>
</dbReference>
<dbReference type="GO" id="GO:0030424">
    <property type="term" value="C:axon"/>
    <property type="evidence" value="ECO:0007669"/>
    <property type="project" value="UniProtKB-SubCell"/>
</dbReference>
<dbReference type="GO" id="GO:0016323">
    <property type="term" value="C:basolateral plasma membrane"/>
    <property type="evidence" value="ECO:0000314"/>
    <property type="project" value="MGI"/>
</dbReference>
<dbReference type="GO" id="GO:0016328">
    <property type="term" value="C:lateral plasma membrane"/>
    <property type="evidence" value="ECO:0007669"/>
    <property type="project" value="Ensembl"/>
</dbReference>
<dbReference type="GO" id="GO:0042470">
    <property type="term" value="C:melanosome"/>
    <property type="evidence" value="ECO:0007669"/>
    <property type="project" value="UniProtKB-SubCell"/>
</dbReference>
<dbReference type="GO" id="GO:0016020">
    <property type="term" value="C:membrane"/>
    <property type="evidence" value="ECO:0000314"/>
    <property type="project" value="MGI"/>
</dbReference>
<dbReference type="GO" id="GO:0043209">
    <property type="term" value="C:myelin sheath"/>
    <property type="evidence" value="ECO:0007005"/>
    <property type="project" value="UniProtKB"/>
</dbReference>
<dbReference type="GO" id="GO:0031090">
    <property type="term" value="C:organelle membrane"/>
    <property type="evidence" value="ECO:0007669"/>
    <property type="project" value="Ensembl"/>
</dbReference>
<dbReference type="GO" id="GO:0005886">
    <property type="term" value="C:plasma membrane"/>
    <property type="evidence" value="ECO:0000314"/>
    <property type="project" value="UniProtKB"/>
</dbReference>
<dbReference type="GO" id="GO:0014069">
    <property type="term" value="C:postsynaptic density"/>
    <property type="evidence" value="ECO:0000314"/>
    <property type="project" value="MGI"/>
</dbReference>
<dbReference type="GO" id="GO:0032991">
    <property type="term" value="C:protein-containing complex"/>
    <property type="evidence" value="ECO:0000266"/>
    <property type="project" value="MGI"/>
</dbReference>
<dbReference type="GO" id="GO:0042383">
    <property type="term" value="C:sarcolemma"/>
    <property type="evidence" value="ECO:0000314"/>
    <property type="project" value="BHF-UCL"/>
</dbReference>
<dbReference type="GO" id="GO:0005890">
    <property type="term" value="C:sodium:potassium-exchanging ATPase complex"/>
    <property type="evidence" value="ECO:0000266"/>
    <property type="project" value="ComplexPortal"/>
</dbReference>
<dbReference type="GO" id="GO:0036126">
    <property type="term" value="C:sperm flagellum"/>
    <property type="evidence" value="ECO:0007669"/>
    <property type="project" value="Ensembl"/>
</dbReference>
<dbReference type="GO" id="GO:0030315">
    <property type="term" value="C:T-tubule"/>
    <property type="evidence" value="ECO:0000314"/>
    <property type="project" value="BHF-UCL"/>
</dbReference>
<dbReference type="GO" id="GO:0005524">
    <property type="term" value="F:ATP binding"/>
    <property type="evidence" value="ECO:0007669"/>
    <property type="project" value="UniProtKB-KW"/>
</dbReference>
<dbReference type="GO" id="GO:0016887">
    <property type="term" value="F:ATP hydrolysis activity"/>
    <property type="evidence" value="ECO:0007669"/>
    <property type="project" value="Ensembl"/>
</dbReference>
<dbReference type="GO" id="GO:0046872">
    <property type="term" value="F:metal ion binding"/>
    <property type="evidence" value="ECO:0007669"/>
    <property type="project" value="UniProtKB-KW"/>
</dbReference>
<dbReference type="GO" id="GO:0008556">
    <property type="term" value="F:P-type potassium transmembrane transporter activity"/>
    <property type="evidence" value="ECO:0000314"/>
    <property type="project" value="UniProt"/>
</dbReference>
<dbReference type="GO" id="GO:0005391">
    <property type="term" value="F:P-type sodium:potassium-exchanging transporter activity"/>
    <property type="evidence" value="ECO:0000314"/>
    <property type="project" value="MGI"/>
</dbReference>
<dbReference type="GO" id="GO:0016791">
    <property type="term" value="F:phosphatase activity"/>
    <property type="evidence" value="ECO:0000315"/>
    <property type="project" value="MGI"/>
</dbReference>
<dbReference type="GO" id="GO:0051087">
    <property type="term" value="F:protein-folding chaperone binding"/>
    <property type="evidence" value="ECO:0007669"/>
    <property type="project" value="Ensembl"/>
</dbReference>
<dbReference type="GO" id="GO:1990239">
    <property type="term" value="F:steroid hormone binding"/>
    <property type="evidence" value="ECO:0007669"/>
    <property type="project" value="Ensembl"/>
</dbReference>
<dbReference type="GO" id="GO:0044325">
    <property type="term" value="F:transmembrane transporter binding"/>
    <property type="evidence" value="ECO:0000353"/>
    <property type="project" value="UniProtKB"/>
</dbReference>
<dbReference type="GO" id="GO:0071383">
    <property type="term" value="P:cellular response to steroid hormone stimulus"/>
    <property type="evidence" value="ECO:0007669"/>
    <property type="project" value="Ensembl"/>
</dbReference>
<dbReference type="GO" id="GO:0010248">
    <property type="term" value="P:establishment or maintenance of transmembrane electrochemical gradient"/>
    <property type="evidence" value="ECO:0000303"/>
    <property type="project" value="ComplexPortal"/>
</dbReference>
<dbReference type="GO" id="GO:0060047">
    <property type="term" value="P:heart contraction"/>
    <property type="evidence" value="ECO:0000315"/>
    <property type="project" value="MGI"/>
</dbReference>
<dbReference type="GO" id="GO:0030007">
    <property type="term" value="P:intracellular potassium ion homeostasis"/>
    <property type="evidence" value="ECO:0000266"/>
    <property type="project" value="ComplexPortal"/>
</dbReference>
<dbReference type="GO" id="GO:0006883">
    <property type="term" value="P:intracellular sodium ion homeostasis"/>
    <property type="evidence" value="ECO:0000266"/>
    <property type="project" value="ComplexPortal"/>
</dbReference>
<dbReference type="GO" id="GO:0086009">
    <property type="term" value="P:membrane repolarization"/>
    <property type="evidence" value="ECO:0007669"/>
    <property type="project" value="Ensembl"/>
</dbReference>
<dbReference type="GO" id="GO:0031947">
    <property type="term" value="P:negative regulation of glucocorticoid biosynthetic process"/>
    <property type="evidence" value="ECO:0000315"/>
    <property type="project" value="MGI"/>
</dbReference>
<dbReference type="GO" id="GO:0045822">
    <property type="term" value="P:negative regulation of heart contraction"/>
    <property type="evidence" value="ECO:0000315"/>
    <property type="project" value="MGI"/>
</dbReference>
<dbReference type="GO" id="GO:0007231">
    <property type="term" value="P:osmosensory signaling pathway"/>
    <property type="evidence" value="ECO:0000314"/>
    <property type="project" value="UniProt"/>
</dbReference>
<dbReference type="GO" id="GO:0045823">
    <property type="term" value="P:positive regulation of heart contraction"/>
    <property type="evidence" value="ECO:0000315"/>
    <property type="project" value="MGI"/>
</dbReference>
<dbReference type="GO" id="GO:0045989">
    <property type="term" value="P:positive regulation of striated muscle contraction"/>
    <property type="evidence" value="ECO:0000315"/>
    <property type="project" value="MGI"/>
</dbReference>
<dbReference type="GO" id="GO:1990573">
    <property type="term" value="P:potassium ion import across plasma membrane"/>
    <property type="evidence" value="ECO:0000266"/>
    <property type="project" value="ComplexPortal"/>
</dbReference>
<dbReference type="GO" id="GO:1902600">
    <property type="term" value="P:proton transmembrane transport"/>
    <property type="evidence" value="ECO:0000303"/>
    <property type="project" value="ComplexPortal"/>
</dbReference>
<dbReference type="GO" id="GO:0008217">
    <property type="term" value="P:regulation of blood pressure"/>
    <property type="evidence" value="ECO:0000316"/>
    <property type="project" value="MGI"/>
</dbReference>
<dbReference type="GO" id="GO:0002028">
    <property type="term" value="P:regulation of sodium ion transport"/>
    <property type="evidence" value="ECO:0000250"/>
    <property type="project" value="UniProtKB"/>
</dbReference>
<dbReference type="GO" id="GO:0002026">
    <property type="term" value="P:regulation of the force of heart contraction"/>
    <property type="evidence" value="ECO:0000315"/>
    <property type="project" value="MGI"/>
</dbReference>
<dbReference type="GO" id="GO:0009410">
    <property type="term" value="P:response to xenobiotic stimulus"/>
    <property type="evidence" value="ECO:0000315"/>
    <property type="project" value="MGI"/>
</dbReference>
<dbReference type="GO" id="GO:0036376">
    <property type="term" value="P:sodium ion export across plasma membrane"/>
    <property type="evidence" value="ECO:0000266"/>
    <property type="project" value="ComplexPortal"/>
</dbReference>
<dbReference type="GO" id="GO:0055078">
    <property type="term" value="P:sodium ion homeostasis"/>
    <property type="evidence" value="ECO:0000314"/>
    <property type="project" value="UniProt"/>
</dbReference>
<dbReference type="CDD" id="cd02608">
    <property type="entry name" value="P-type_ATPase_Na-K_like"/>
    <property type="match status" value="1"/>
</dbReference>
<dbReference type="FunFam" id="2.70.150.10:FF:000106">
    <property type="entry name" value="Sodium/potassium-transporting ATPase subunit alpha"/>
    <property type="match status" value="1"/>
</dbReference>
<dbReference type="FunFam" id="3.40.1110.10:FF:000001">
    <property type="entry name" value="Sodium/potassium-transporting ATPase subunit alpha"/>
    <property type="match status" value="1"/>
</dbReference>
<dbReference type="FunFam" id="3.40.50.1000:FF:000004">
    <property type="entry name" value="Sodium/potassium-transporting ATPase subunit alpha"/>
    <property type="match status" value="1"/>
</dbReference>
<dbReference type="FunFam" id="1.20.1110.10:FF:000095">
    <property type="entry name" value="Sodium/potassium-transporting ATPase subunit alpha-1"/>
    <property type="match status" value="2"/>
</dbReference>
<dbReference type="Gene3D" id="3.40.1110.10">
    <property type="entry name" value="Calcium-transporting ATPase, cytoplasmic domain N"/>
    <property type="match status" value="1"/>
</dbReference>
<dbReference type="Gene3D" id="2.70.150.10">
    <property type="entry name" value="Calcium-transporting ATPase, cytoplasmic transduction domain A"/>
    <property type="match status" value="1"/>
</dbReference>
<dbReference type="Gene3D" id="1.20.1110.10">
    <property type="entry name" value="Calcium-transporting ATPase, transmembrane domain"/>
    <property type="match status" value="1"/>
</dbReference>
<dbReference type="Gene3D" id="3.40.50.1000">
    <property type="entry name" value="HAD superfamily/HAD-like"/>
    <property type="match status" value="1"/>
</dbReference>
<dbReference type="InterPro" id="IPR006068">
    <property type="entry name" value="ATPase_P-typ_cation-transptr_C"/>
</dbReference>
<dbReference type="InterPro" id="IPR004014">
    <property type="entry name" value="ATPase_P-typ_cation-transptr_N"/>
</dbReference>
<dbReference type="InterPro" id="IPR023299">
    <property type="entry name" value="ATPase_P-typ_cyto_dom_N"/>
</dbReference>
<dbReference type="InterPro" id="IPR018303">
    <property type="entry name" value="ATPase_P-typ_P_site"/>
</dbReference>
<dbReference type="InterPro" id="IPR023298">
    <property type="entry name" value="ATPase_P-typ_TM_dom_sf"/>
</dbReference>
<dbReference type="InterPro" id="IPR008250">
    <property type="entry name" value="ATPase_P-typ_transduc_dom_A_sf"/>
</dbReference>
<dbReference type="InterPro" id="IPR050510">
    <property type="entry name" value="Cation_transp_ATPase_P-type"/>
</dbReference>
<dbReference type="InterPro" id="IPR036412">
    <property type="entry name" value="HAD-like_sf"/>
</dbReference>
<dbReference type="InterPro" id="IPR023214">
    <property type="entry name" value="HAD_sf"/>
</dbReference>
<dbReference type="InterPro" id="IPR005775">
    <property type="entry name" value="P-type_ATPase_IIC"/>
</dbReference>
<dbReference type="InterPro" id="IPR001757">
    <property type="entry name" value="P_typ_ATPase"/>
</dbReference>
<dbReference type="InterPro" id="IPR044492">
    <property type="entry name" value="P_typ_ATPase_HD_dom"/>
</dbReference>
<dbReference type="NCBIfam" id="TIGR01106">
    <property type="entry name" value="ATPase-IIC_X-K"/>
    <property type="match status" value="1"/>
</dbReference>
<dbReference type="NCBIfam" id="TIGR01494">
    <property type="entry name" value="ATPase_P-type"/>
    <property type="match status" value="2"/>
</dbReference>
<dbReference type="PANTHER" id="PTHR43294">
    <property type="entry name" value="SODIUM/POTASSIUM-TRANSPORTING ATPASE SUBUNIT ALPHA"/>
    <property type="match status" value="1"/>
</dbReference>
<dbReference type="PANTHER" id="PTHR43294:SF9">
    <property type="entry name" value="SODIUM_POTASSIUM-TRANSPORTING ATPASE SUBUNIT ALPHA-1"/>
    <property type="match status" value="1"/>
</dbReference>
<dbReference type="Pfam" id="PF13246">
    <property type="entry name" value="Cation_ATPase"/>
    <property type="match status" value="1"/>
</dbReference>
<dbReference type="Pfam" id="PF00689">
    <property type="entry name" value="Cation_ATPase_C"/>
    <property type="match status" value="1"/>
</dbReference>
<dbReference type="Pfam" id="PF00690">
    <property type="entry name" value="Cation_ATPase_N"/>
    <property type="match status" value="1"/>
</dbReference>
<dbReference type="Pfam" id="PF00122">
    <property type="entry name" value="E1-E2_ATPase"/>
    <property type="match status" value="1"/>
</dbReference>
<dbReference type="PRINTS" id="PR00119">
    <property type="entry name" value="CATATPASE"/>
</dbReference>
<dbReference type="PRINTS" id="PR00121">
    <property type="entry name" value="NAKATPASE"/>
</dbReference>
<dbReference type="SFLD" id="SFLDS00003">
    <property type="entry name" value="Haloacid_Dehalogenase"/>
    <property type="match status" value="1"/>
</dbReference>
<dbReference type="SFLD" id="SFLDF00027">
    <property type="entry name" value="p-type_atpase"/>
    <property type="match status" value="1"/>
</dbReference>
<dbReference type="SMART" id="SM00831">
    <property type="entry name" value="Cation_ATPase_N"/>
    <property type="match status" value="1"/>
</dbReference>
<dbReference type="SUPFAM" id="SSF81653">
    <property type="entry name" value="Calcium ATPase, transduction domain A"/>
    <property type="match status" value="1"/>
</dbReference>
<dbReference type="SUPFAM" id="SSF81665">
    <property type="entry name" value="Calcium ATPase, transmembrane domain M"/>
    <property type="match status" value="1"/>
</dbReference>
<dbReference type="SUPFAM" id="SSF56784">
    <property type="entry name" value="HAD-like"/>
    <property type="match status" value="1"/>
</dbReference>
<dbReference type="SUPFAM" id="SSF81660">
    <property type="entry name" value="Metal cation-transporting ATPase, ATP-binding domain N"/>
    <property type="match status" value="1"/>
</dbReference>
<dbReference type="PROSITE" id="PS00154">
    <property type="entry name" value="ATPASE_E1_E2"/>
    <property type="match status" value="1"/>
</dbReference>
<reference key="1">
    <citation type="journal article" date="2004" name="Genome Res.">
        <title>The status, quality, and expansion of the NIH full-length cDNA project: the Mammalian Gene Collection (MGC).</title>
        <authorList>
            <consortium name="The MGC Project Team"/>
        </authorList>
    </citation>
    <scope>NUCLEOTIDE SEQUENCE [LARGE SCALE MRNA]</scope>
    <source>
        <strain>FVB/N</strain>
        <tissue>Liver</tissue>
        <tissue>Mammary gland</tissue>
    </source>
</reference>
<reference key="2">
    <citation type="submission" date="2009-01" db="UniProtKB">
        <authorList>
            <person name="Lubec G."/>
            <person name="Kang S.U."/>
            <person name="Sunyer B."/>
            <person name="Chen W.-Q."/>
        </authorList>
    </citation>
    <scope>PROTEIN SEQUENCE OF 55-61; 75-91; 163-173; 178-194; 213-240; 256-264; 360-377; 414-444; 446-458; 477-494; 536-551; 597-605; 613-625; 630-658; 662-683; 699-774 AND 941-950</scope>
    <source>
        <strain>C57BL/6J</strain>
        <strain>OF1</strain>
        <tissue>Brain</tissue>
        <tissue>Hippocampus</tissue>
    </source>
</reference>
<reference key="3">
    <citation type="journal article" date="2007" name="FASEB J.">
        <title>The intracellular region of FXYD1 is sufficient to regulate cardiac Na/K ATPase.</title>
        <authorList>
            <person name="Pavlovic D."/>
            <person name="Fuller W."/>
            <person name="Shattock M.J."/>
        </authorList>
    </citation>
    <scope>INTERACTION WITH FXYD1</scope>
</reference>
<reference key="4">
    <citation type="journal article" date="2005" name="Mol. Biol. Cell">
        <title>FXYD3 (Mat-8), a new regulator of Na,K-ATPase.</title>
        <authorList>
            <person name="Crambert G."/>
            <person name="Li C."/>
            <person name="Claeys D."/>
            <person name="Geering K."/>
        </authorList>
    </citation>
    <scope>INTERACTION WITH FXYD3</scope>
</reference>
<reference key="5">
    <citation type="journal article" date="2007" name="Neuron">
        <title>Glial Nax channels control lactate signaling to neurons for brain [Na+] sensing.</title>
        <authorList>
            <person name="Shimizu H."/>
            <person name="Watanabe E."/>
            <person name="Hiyama T.Y."/>
            <person name="Nagakura A."/>
            <person name="Fujikawa A."/>
            <person name="Okado H."/>
            <person name="Yanagawa Y."/>
            <person name="Obata K."/>
            <person name="Noda M."/>
        </authorList>
    </citation>
    <scope>FUNCTION</scope>
    <scope>INTERACTION WITH SCN7A</scope>
    <scope>SUBCELLULAR LOCATION</scope>
    <scope>REGION</scope>
</reference>
<reference key="6">
    <citation type="journal article" date="2007" name="Mol. Cell. Proteomics">
        <title>Qualitative and quantitative analyses of protein phosphorylation in naive and stimulated mouse synaptosomal preparations.</title>
        <authorList>
            <person name="Munton R.P."/>
            <person name="Tweedie-Cullen R."/>
            <person name="Livingstone-Zatchej M."/>
            <person name="Weinandy F."/>
            <person name="Waidelich M."/>
            <person name="Longo D."/>
            <person name="Gehrig P."/>
            <person name="Potthast F."/>
            <person name="Rutishauser D."/>
            <person name="Gerrits B."/>
            <person name="Panse C."/>
            <person name="Schlapbach R."/>
            <person name="Mansuy I.M."/>
        </authorList>
    </citation>
    <scope>IDENTIFICATION BY MASS SPECTROMETRY [LARGE SCALE ANALYSIS]</scope>
    <source>
        <tissue>Brain cortex</tissue>
    </source>
</reference>
<reference key="7">
    <citation type="journal article" date="2008" name="J. Proteome Res.">
        <title>Large-scale identification and evolution indexing of tyrosine phosphorylation sites from murine brain.</title>
        <authorList>
            <person name="Ballif B.A."/>
            <person name="Carey G.R."/>
            <person name="Sunyaev S.R."/>
            <person name="Gygi S.P."/>
        </authorList>
    </citation>
    <scope>PHOSPHORYLATION [LARGE SCALE ANALYSIS] AT TYR-260</scope>
    <scope>IDENTIFICATION BY MASS SPECTROMETRY [LARGE SCALE ANALYSIS]</scope>
    <source>
        <tissue>Brain</tissue>
    </source>
</reference>
<reference key="8">
    <citation type="journal article" date="2010" name="Cell">
        <title>A tissue-specific atlas of mouse protein phosphorylation and expression.</title>
        <authorList>
            <person name="Huttlin E.L."/>
            <person name="Jedrychowski M.P."/>
            <person name="Elias J.E."/>
            <person name="Goswami T."/>
            <person name="Rad R."/>
            <person name="Beausoleil S.A."/>
            <person name="Villen J."/>
            <person name="Haas W."/>
            <person name="Sowa M.E."/>
            <person name="Gygi S.P."/>
        </authorList>
    </citation>
    <scope>PHOSPHORYLATION [LARGE SCALE ANALYSIS] AT SER-228; SER-668 AND SER-675</scope>
    <scope>IDENTIFICATION BY MASS SPECTROMETRY [LARGE SCALE ANALYSIS]</scope>
    <source>
        <tissue>Brain</tissue>
        <tissue>Brown adipose tissue</tissue>
        <tissue>Heart</tissue>
        <tissue>Kidney</tissue>
        <tissue>Liver</tissue>
        <tissue>Lung</tissue>
        <tissue>Pancreas</tissue>
        <tissue>Spleen</tissue>
        <tissue>Testis</tissue>
    </source>
</reference>
<reference key="9">
    <citation type="journal article" date="2013" name="Mol. Cell">
        <title>SIRT5-mediated lysine desuccinylation impacts diverse metabolic pathways.</title>
        <authorList>
            <person name="Park J."/>
            <person name="Chen Y."/>
            <person name="Tishkoff D.X."/>
            <person name="Peng C."/>
            <person name="Tan M."/>
            <person name="Dai L."/>
            <person name="Xie Z."/>
            <person name="Zhang Y."/>
            <person name="Zwaans B.M."/>
            <person name="Skinner M.E."/>
            <person name="Lombard D.B."/>
            <person name="Zhao Y."/>
        </authorList>
    </citation>
    <scope>ACETYLATION [LARGE SCALE ANALYSIS] AT LYS-9 AND LYS-21</scope>
    <scope>SUCCINYLATION [LARGE SCALE ANALYSIS] AT LYS-661</scope>
    <scope>IDENTIFICATION BY MASS SPECTROMETRY [LARGE SCALE ANALYSIS]</scope>
    <source>
        <tissue>Embryonic fibroblast</tissue>
    </source>
</reference>
<gene>
    <name type="primary">Atp1a1</name>
</gene>
<feature type="propeptide" id="PRO_0000002485" evidence="1">
    <location>
        <begin position="1"/>
        <end position="5"/>
    </location>
</feature>
<feature type="chain" id="PRO_0000002486" description="Sodium/potassium-transporting ATPase subunit alpha-1">
    <location>
        <begin position="6"/>
        <end position="1023"/>
    </location>
</feature>
<feature type="topological domain" description="Cytoplasmic" evidence="9">
    <location>
        <begin position="6"/>
        <end position="96"/>
    </location>
</feature>
<feature type="transmembrane region" description="Helical" evidence="4">
    <location>
        <begin position="97"/>
        <end position="117"/>
    </location>
</feature>
<feature type="topological domain" description="Extracellular" evidence="9">
    <location>
        <begin position="118"/>
        <end position="129"/>
    </location>
</feature>
<feature type="transmembrane region" description="Helical" evidence="4">
    <location>
        <begin position="130"/>
        <end position="150"/>
    </location>
</feature>
<feature type="topological domain" description="Cytoplasmic" evidence="9">
    <location>
        <begin position="151"/>
        <end position="291"/>
    </location>
</feature>
<feature type="transmembrane region" description="Helical" evidence="4">
    <location>
        <begin position="292"/>
        <end position="312"/>
    </location>
</feature>
<feature type="topological domain" description="Extracellular" evidence="9">
    <location>
        <begin position="313"/>
        <end position="319"/>
    </location>
</feature>
<feature type="transmembrane region" description="Helical" evidence="4">
    <location>
        <begin position="320"/>
        <end position="340"/>
    </location>
</feature>
<feature type="topological domain" description="Cytoplasmic" evidence="9">
    <location>
        <begin position="341"/>
        <end position="775"/>
    </location>
</feature>
<feature type="transmembrane region" description="Helical" evidence="4">
    <location>
        <begin position="776"/>
        <end position="798"/>
    </location>
</feature>
<feature type="topological domain" description="Extracellular" evidence="9">
    <location>
        <begin position="799"/>
        <end position="801"/>
    </location>
</feature>
<feature type="transmembrane region" description="Helical" evidence="4">
    <location>
        <begin position="802"/>
        <end position="824"/>
    </location>
</feature>
<feature type="topological domain" description="Cytoplasmic" evidence="9">
    <location>
        <begin position="825"/>
        <end position="849"/>
    </location>
</feature>
<feature type="transmembrane region" description="Helical" evidence="4">
    <location>
        <begin position="850"/>
        <end position="872"/>
    </location>
</feature>
<feature type="topological domain" description="Extracellular" evidence="9">
    <location>
        <begin position="873"/>
        <end position="915"/>
    </location>
</feature>
<feature type="transmembrane region" description="Helical" evidence="4">
    <location>
        <begin position="916"/>
        <end position="936"/>
    </location>
</feature>
<feature type="topological domain" description="Cytoplasmic" evidence="9">
    <location>
        <begin position="937"/>
        <end position="952"/>
    </location>
</feature>
<feature type="transmembrane region" description="Helical" evidence="4">
    <location>
        <begin position="953"/>
        <end position="973"/>
    </location>
</feature>
<feature type="topological domain" description="Extracellular" evidence="9">
    <location>
        <begin position="974"/>
        <end position="979"/>
    </location>
</feature>
<feature type="transmembrane region" description="Helical" evidence="4">
    <location>
        <begin position="980"/>
        <end position="1000"/>
    </location>
</feature>
<feature type="topological domain" description="Cytoplasmic" evidence="9">
    <location>
        <begin position="1001"/>
        <end position="1023"/>
    </location>
</feature>
<feature type="region of interest" description="Disordered" evidence="5">
    <location>
        <begin position="1"/>
        <end position="39"/>
    </location>
</feature>
<feature type="region of interest" description="Phosphoinositide-3 kinase binding" evidence="1">
    <location>
        <begin position="82"/>
        <end position="84"/>
    </location>
</feature>
<feature type="region of interest" description="Disordered" evidence="5">
    <location>
        <begin position="216"/>
        <end position="235"/>
    </location>
</feature>
<feature type="region of interest" description="Mediates interaction with SCN7A" evidence="8">
    <location>
        <begin position="596"/>
        <end position="717"/>
    </location>
</feature>
<feature type="compositionally biased region" description="Basic and acidic residues" evidence="5">
    <location>
        <begin position="1"/>
        <end position="11"/>
    </location>
</feature>
<feature type="compositionally biased region" description="Basic and acidic residues" evidence="5">
    <location>
        <begin position="28"/>
        <end position="39"/>
    </location>
</feature>
<feature type="active site" description="4-aspartylphosphate intermediate" evidence="1">
    <location>
        <position position="376"/>
    </location>
</feature>
<feature type="binding site" evidence="1">
    <location>
        <position position="487"/>
    </location>
    <ligand>
        <name>ATP</name>
        <dbReference type="ChEBI" id="CHEBI:30616"/>
    </ligand>
</feature>
<feature type="binding site" evidence="1">
    <location>
        <position position="717"/>
    </location>
    <ligand>
        <name>Mg(2+)</name>
        <dbReference type="ChEBI" id="CHEBI:18420"/>
    </ligand>
</feature>
<feature type="binding site" evidence="1">
    <location>
        <position position="721"/>
    </location>
    <ligand>
        <name>Mg(2+)</name>
        <dbReference type="ChEBI" id="CHEBI:18420"/>
    </ligand>
</feature>
<feature type="modified residue" description="N6-acetyllysine" evidence="12">
    <location>
        <position position="9"/>
    </location>
</feature>
<feature type="modified residue" description="Phosphotyrosine" evidence="3">
    <location>
        <position position="10"/>
    </location>
</feature>
<feature type="modified residue" description="Phosphoserine" evidence="3">
    <location>
        <position position="16"/>
    </location>
</feature>
<feature type="modified residue" description="N6-acetyllysine" evidence="12">
    <location>
        <position position="21"/>
    </location>
</feature>
<feature type="modified residue" description="Phosphoserine" evidence="3">
    <location>
        <position position="40"/>
    </location>
</feature>
<feature type="modified residue" description="Phosphoserine" evidence="3">
    <location>
        <position position="47"/>
    </location>
</feature>
<feature type="modified residue" description="Phosphoserine" evidence="11">
    <location>
        <position position="228"/>
    </location>
</feature>
<feature type="modified residue" description="Phosphotyrosine" evidence="10">
    <location>
        <position position="260"/>
    </location>
</feature>
<feature type="modified residue" description="Phosphoserine" evidence="3">
    <location>
        <position position="452"/>
    </location>
</feature>
<feature type="modified residue" description="Phosphoserine" evidence="3">
    <location>
        <position position="484"/>
    </location>
</feature>
<feature type="modified residue" description="Phosphotyrosine" evidence="2">
    <location>
        <position position="542"/>
    </location>
</feature>
<feature type="modified residue" description="N6-succinyllysine" evidence="12">
    <location>
        <position position="661"/>
    </location>
</feature>
<feature type="modified residue" description="Phosphoserine" evidence="11">
    <location>
        <position position="668"/>
    </location>
</feature>
<feature type="modified residue" description="Phosphoserine" evidence="11">
    <location>
        <position position="675"/>
    </location>
</feature>
<feature type="modified residue" description="Phosphoserine; by PKA" evidence="3">
    <location>
        <position position="943"/>
    </location>
</feature>
<accession>Q8VDN2</accession>
<accession>Q91Z09</accession>
<keyword id="KW-0007">Acetylation</keyword>
<keyword id="KW-0067">ATP-binding</keyword>
<keyword id="KW-1003">Cell membrane</keyword>
<keyword id="KW-0966">Cell projection</keyword>
<keyword id="KW-0903">Direct protein sequencing</keyword>
<keyword id="KW-0406">Ion transport</keyword>
<keyword id="KW-0460">Magnesium</keyword>
<keyword id="KW-0472">Membrane</keyword>
<keyword id="KW-0479">Metal-binding</keyword>
<keyword id="KW-0547">Nucleotide-binding</keyword>
<keyword id="KW-0597">Phosphoprotein</keyword>
<keyword id="KW-0630">Potassium</keyword>
<keyword id="KW-0633">Potassium transport</keyword>
<keyword id="KW-1185">Reference proteome</keyword>
<keyword id="KW-0915">Sodium</keyword>
<keyword id="KW-0739">Sodium transport</keyword>
<keyword id="KW-0740">Sodium/potassium transport</keyword>
<keyword id="KW-1278">Translocase</keyword>
<keyword id="KW-0812">Transmembrane</keyword>
<keyword id="KW-1133">Transmembrane helix</keyword>
<keyword id="KW-0813">Transport</keyword>
<proteinExistence type="evidence at protein level"/>
<protein>
    <recommendedName>
        <fullName>Sodium/potassium-transporting ATPase subunit alpha-1</fullName>
        <shortName>Na(+)/K(+) ATPase alpha-1 subunit</shortName>
        <ecNumber>7.2.2.13</ecNumber>
    </recommendedName>
    <alternativeName>
        <fullName>Sodium pump subunit alpha-1</fullName>
    </alternativeName>
</protein>
<organism>
    <name type="scientific">Mus musculus</name>
    <name type="common">Mouse</name>
    <dbReference type="NCBI Taxonomy" id="10090"/>
    <lineage>
        <taxon>Eukaryota</taxon>
        <taxon>Metazoa</taxon>
        <taxon>Chordata</taxon>
        <taxon>Craniata</taxon>
        <taxon>Vertebrata</taxon>
        <taxon>Euteleostomi</taxon>
        <taxon>Mammalia</taxon>
        <taxon>Eutheria</taxon>
        <taxon>Euarchontoglires</taxon>
        <taxon>Glires</taxon>
        <taxon>Rodentia</taxon>
        <taxon>Myomorpha</taxon>
        <taxon>Muroidea</taxon>
        <taxon>Muridae</taxon>
        <taxon>Murinae</taxon>
        <taxon>Mus</taxon>
        <taxon>Mus</taxon>
    </lineage>
</organism>
<sequence>MGKGVGRDKYEPAAVSEHGDKKGKKAKKERDMDELKKEVSMDDHKLSLDELHRKYGTDLSRGLTPARAAEILARDGPNALTPPPTTPEWVKFCRQLFGGFSMLLWIGAILCFLAYGIRSATEEEPPNDDLYLGVVLSAVVIITGCFSYYQEAKSSKIMESFKNMVPQQALVIRNGEKMSINAEDVVVGDLVEVKGGDRIPADLRIISANGCKVDNSSLTGESEPQTRSPDFTNENPLETRNIAFFSTNCVEGTARGIVVYTGDRTVMGRIATLASGLEGGQTPIAEEIEHFIHLITGVAVFLGVSFFILSLILEYTWLEAVIFLIGIIVANVPEGLLATVTVCLTLTAKRMARKNCLVKNLEAVETLGSTSTICSDKTGTLTQNRMTVAHMWFDNQIHEADTTENQSGVSFDKTSATWFALSRIAGLCNRAVFQANQENLPILKRAVAGDASESALLKCIEVCCGSVMEMREKYSKIVEIPFNSTNKYQLSIHKNPNASEPKHLLVMKGAPERILDRCSSILLHGKEQPLDEELKDAFQNAYLELGGLGERVLGFCHLLLPDEQFPEGFQFDTDDVNFPVDNLCFVGLISMIDPPRAAVPDAVGKCRSAGIKVIMVTGDHPITAKAIAKGVGIISEGNETVEDIAARLNIPVNQVNPRDAKACVVHGSDLKDMTSEELDDILRYHTEIVFARTSPQQKLIIVEGCQRQGAIVAVTGDGVNDSPALKKADIGVAMGIVGSDVSKQAADMILLDDNFASIVTGVEEGRLIFDNLKKSIAYTLTSNIPEITPFLIFIIANIPLPLGTVTILCIDLGTDMVPAISLAYEQAESDIMKRQPRNPKTDKLVNERLISMAYGQIGMIQALGGFFTYFVILAENGFLPFHLLGIRETWDDRWVNDVEDSYGQQWTYEQRKIVEFTCHTAFFVSIVVVQWADLVICKTRRNSVFQQGMKNKILIFGLFEETALAAFLSYCPGMGAALRMYPLKPTWWFCAFPYSLLIFVYDEVRKLIIRRRPGGWVEKETYY</sequence>
<comment type="function">
    <text evidence="2 8">This is the catalytic component of the active enzyme, which catalyzes the hydrolysis of ATP coupled with the exchange of sodium and potassium ions across the plasma membrane. This action creates the electrochemical gradient of sodium and potassium ions, providing the energy for active transport of various nutrients (By similarity). Could also be part of an osmosensory signaling pathway that senses body-fluid sodium levels and controls salt intake behavior as well as voluntary water intake to regulate sodium homeostasis (PubMed:17408578).</text>
</comment>
<comment type="catalytic activity">
    <reaction>
        <text>K(+)(out) + Na(+)(in) + ATP + H2O = K(+)(in) + Na(+)(out) + ADP + phosphate + H(+)</text>
        <dbReference type="Rhea" id="RHEA:18353"/>
        <dbReference type="ChEBI" id="CHEBI:15377"/>
        <dbReference type="ChEBI" id="CHEBI:15378"/>
        <dbReference type="ChEBI" id="CHEBI:29101"/>
        <dbReference type="ChEBI" id="CHEBI:29103"/>
        <dbReference type="ChEBI" id="CHEBI:30616"/>
        <dbReference type="ChEBI" id="CHEBI:43474"/>
        <dbReference type="ChEBI" id="CHEBI:456216"/>
        <dbReference type="EC" id="7.2.2.13"/>
    </reaction>
</comment>
<comment type="subunit">
    <text evidence="2 3 6 7 8">The sodium/potassium-transporting ATPase is composed of a catalytic alpha subunit, an auxiliary non-catalytic beta subunit and an additional regulatory subunit. Interacts with regulatory subunit FXYD1 (PubMed:17283221). Interacts with regulatory subunit FXYD3 (PubMed:15743908). Interacts with SIK1 (By similarity). Interacts with SLC35G1 and STIM1 (By similarity). Interacts with CLN3; this interaction regulates the sodium/potassium-transporting ATPase complex localization at the plasma membrane (By similarity). Interacts with SCN7A; activates ATP1A1 P-type sodium:potassium-exchanging transporter activity which indirectly signals to nearby neurons to regulate sodium homeostasis (PubMed:17408578).</text>
</comment>
<comment type="interaction">
    <interactant intactId="EBI-444536">
        <id>Q8VDN2</id>
    </interactant>
    <interactant intactId="EBI-541478">
        <id>P11881</id>
        <label>Itpr1</label>
    </interactant>
    <organismsDiffer>false</organismsDiffer>
    <experiments>3</experiments>
</comment>
<comment type="interaction">
    <interactant intactId="EBI-444536">
        <id>Q8VDN2</id>
    </interactant>
    <interactant intactId="EBI-8351080">
        <id>O35157</id>
        <label>Slc8a1</label>
    </interactant>
    <organismsDiffer>false</organismsDiffer>
    <experiments>4</experiments>
</comment>
<comment type="subcellular location">
    <subcellularLocation>
        <location evidence="8">Cell membrane</location>
        <topology evidence="4">Multi-pass membrane protein</topology>
    </subcellularLocation>
    <subcellularLocation>
        <location evidence="3">Basolateral cell membrane</location>
        <topology evidence="4">Multi-pass membrane protein</topology>
    </subcellularLocation>
    <subcellularLocation>
        <location evidence="2">Cell membrane</location>
        <location evidence="2">Sarcolemma</location>
        <topology evidence="4">Multi-pass membrane protein</topology>
    </subcellularLocation>
    <subcellularLocation>
        <location evidence="3">Cell projection</location>
        <location evidence="3">Axon</location>
    </subcellularLocation>
    <subcellularLocation>
        <location evidence="2">Melanosome</location>
    </subcellularLocation>
</comment>
<comment type="PTM">
    <text evidence="1">Phosphorylation on Tyr-10 modulates pumping activity. Phosphorylation of Ser-943 by PKA modulates the response of ATP1A1 to PKC. Dephosphorylation by protein phosphatase 2A (PP2A) following increases in intracellular sodium, leading to increase catalytic activity (By similarity).</text>
</comment>
<comment type="similarity">
    <text evidence="9">Belongs to the cation transport ATPase (P-type) (TC 3.A.3) family. Type IIC subfamily.</text>
</comment>